<sequence>MSFLTTPKMLSEYQCLKNIGFSHKTVLKRRLFRKECTPALKSFYSTQDPALNEVRTEKLKNGVTYVCDPRPGHFSGLGVYVKAGSRYETKKFSGVSHFMDRLAFQATERTPVGEMKAKLENLGGNYMCSTSRESMIYQAAVFNDDVKSMSKLLAETVLAPKIQEDDLVHYRDSIIYENSELWTKPDALLGEFAHVTAFQNNTLGNCLLCTPDKVNGITATSIREYLKYFYRPEHLTLAYAGIPQEIAKEITKELYGHLPSSSLPPLEAIPSHYTGGFMGIKKSEAPPVPYQQEFTHVVIAMEGLPVTDPDIYALACLQFLLGGGGSFSAGGPGKGMYSRLYLNVLNQYPWVETCMAFNHSYTDSGLFGMFVTILDDAAHLAAPLIIRELCNTVLSVTSEETERAKNQLKSSLLMNLESRMISLEDLGRQIQTQNGLYITPKEMIEKIDALTPSDLSRVARRVLTGNVSNPGNGTGKPTVLIHGNVDEVGDVFALCKKAGIGH</sequence>
<organism>
    <name type="scientific">Schizosaccharomyces pombe (strain 972 / ATCC 24843)</name>
    <name type="common">Fission yeast</name>
    <dbReference type="NCBI Taxonomy" id="284812"/>
    <lineage>
        <taxon>Eukaryota</taxon>
        <taxon>Fungi</taxon>
        <taxon>Dikarya</taxon>
        <taxon>Ascomycota</taxon>
        <taxon>Taphrinomycotina</taxon>
        <taxon>Schizosaccharomycetes</taxon>
        <taxon>Schizosaccharomycetales</taxon>
        <taxon>Schizosaccharomycetaceae</taxon>
        <taxon>Schizosaccharomyces</taxon>
    </lineage>
</organism>
<gene>
    <name type="primary">mas2</name>
    <name type="ORF">SPBC18E5.12c</name>
    <name type="ORF">SPBC23G7.02c</name>
</gene>
<feature type="transit peptide" description="Mitochondrion" evidence="2">
    <location>
        <begin position="1"/>
        <end status="unknown"/>
    </location>
</feature>
<feature type="chain" id="PRO_0000026772" description="Probable mitochondrial-processing peptidase subunit alpha">
    <location>
        <begin status="unknown"/>
        <end position="502"/>
    </location>
</feature>
<proteinExistence type="inferred from homology"/>
<dbReference type="EMBL" id="CU329671">
    <property type="protein sequence ID" value="CAA22672.2"/>
    <property type="molecule type" value="Genomic_DNA"/>
</dbReference>
<dbReference type="PIR" id="T39763">
    <property type="entry name" value="T39763"/>
</dbReference>
<dbReference type="RefSeq" id="NP_595859.2">
    <property type="nucleotide sequence ID" value="NM_001021763.2"/>
</dbReference>
<dbReference type="SMR" id="O94745"/>
<dbReference type="BioGRID" id="277236">
    <property type="interactions" value="2"/>
</dbReference>
<dbReference type="FunCoup" id="O94745">
    <property type="interactions" value="755"/>
</dbReference>
<dbReference type="STRING" id="284812.O94745"/>
<dbReference type="PaxDb" id="4896-SPBC18E5.12c.1"/>
<dbReference type="EnsemblFungi" id="SPBC18E5.12c.1">
    <property type="protein sequence ID" value="SPBC18E5.12c.1:pep"/>
    <property type="gene ID" value="SPBC18E5.12c"/>
</dbReference>
<dbReference type="GeneID" id="2540713"/>
<dbReference type="KEGG" id="spo:2540713"/>
<dbReference type="PomBase" id="SPBC18E5.12c">
    <property type="gene designation" value="mas2"/>
</dbReference>
<dbReference type="VEuPathDB" id="FungiDB:SPBC18E5.12c"/>
<dbReference type="eggNOG" id="KOG2067">
    <property type="taxonomic scope" value="Eukaryota"/>
</dbReference>
<dbReference type="HOGENOM" id="CLU_009902_5_2_1"/>
<dbReference type="InParanoid" id="O94745"/>
<dbReference type="OMA" id="LKYHHSP"/>
<dbReference type="Reactome" id="R-SPO-611105">
    <property type="pathway name" value="Respiratory electron transport"/>
</dbReference>
<dbReference type="Reactome" id="R-SPO-9837999">
    <property type="pathway name" value="Mitochondrial protein degradation"/>
</dbReference>
<dbReference type="PRO" id="PR:O94745"/>
<dbReference type="Proteomes" id="UP000002485">
    <property type="component" value="Chromosome II"/>
</dbReference>
<dbReference type="GO" id="GO:0017087">
    <property type="term" value="C:mitochondrial processing peptidase complex"/>
    <property type="evidence" value="ECO:0000250"/>
    <property type="project" value="PomBase"/>
</dbReference>
<dbReference type="GO" id="GO:0005739">
    <property type="term" value="C:mitochondrion"/>
    <property type="evidence" value="ECO:0007005"/>
    <property type="project" value="PomBase"/>
</dbReference>
<dbReference type="GO" id="GO:0046872">
    <property type="term" value="F:metal ion binding"/>
    <property type="evidence" value="ECO:0007669"/>
    <property type="project" value="InterPro"/>
</dbReference>
<dbReference type="GO" id="GO:0004222">
    <property type="term" value="F:metalloendopeptidase activity"/>
    <property type="evidence" value="ECO:0000250"/>
    <property type="project" value="PomBase"/>
</dbReference>
<dbReference type="GO" id="GO:0006627">
    <property type="term" value="P:protein processing involved in protein targeting to mitochondrion"/>
    <property type="evidence" value="ECO:0000318"/>
    <property type="project" value="GO_Central"/>
</dbReference>
<dbReference type="FunFam" id="3.30.830.10:FF:000023">
    <property type="entry name" value="Mitochondrial processing peptidase alpha subunit"/>
    <property type="match status" value="1"/>
</dbReference>
<dbReference type="Gene3D" id="3.30.830.10">
    <property type="entry name" value="Metalloenzyme, LuxS/M16 peptidase-like"/>
    <property type="match status" value="2"/>
</dbReference>
<dbReference type="InterPro" id="IPR011249">
    <property type="entry name" value="Metalloenz_LuxS/M16"/>
</dbReference>
<dbReference type="InterPro" id="IPR050361">
    <property type="entry name" value="MPP/UQCRC_Complex"/>
</dbReference>
<dbReference type="InterPro" id="IPR011765">
    <property type="entry name" value="Pept_M16_N"/>
</dbReference>
<dbReference type="InterPro" id="IPR001431">
    <property type="entry name" value="Pept_M16_Zn_BS"/>
</dbReference>
<dbReference type="InterPro" id="IPR007863">
    <property type="entry name" value="Peptidase_M16_C"/>
</dbReference>
<dbReference type="PANTHER" id="PTHR11851">
    <property type="entry name" value="METALLOPROTEASE"/>
    <property type="match status" value="1"/>
</dbReference>
<dbReference type="PANTHER" id="PTHR11851:SF49">
    <property type="entry name" value="MITOCHONDRIAL-PROCESSING PEPTIDASE SUBUNIT ALPHA"/>
    <property type="match status" value="1"/>
</dbReference>
<dbReference type="Pfam" id="PF00675">
    <property type="entry name" value="Peptidase_M16"/>
    <property type="match status" value="1"/>
</dbReference>
<dbReference type="Pfam" id="PF05193">
    <property type="entry name" value="Peptidase_M16_C"/>
    <property type="match status" value="1"/>
</dbReference>
<dbReference type="SUPFAM" id="SSF63411">
    <property type="entry name" value="LuxS/MPP-like metallohydrolase"/>
    <property type="match status" value="2"/>
</dbReference>
<dbReference type="PROSITE" id="PS00143">
    <property type="entry name" value="INSULINASE"/>
    <property type="match status" value="1"/>
</dbReference>
<protein>
    <recommendedName>
        <fullName>Probable mitochondrial-processing peptidase subunit alpha</fullName>
    </recommendedName>
    <alternativeName>
        <fullName>Alpha-MPP</fullName>
    </alternativeName>
    <alternativeName>
        <fullName evidence="4">Inactive zinc metalloprotease alpha</fullName>
    </alternativeName>
</protein>
<comment type="function">
    <text evidence="1">Substrate recognition and binding subunit of the essential mitochondrial processing protease (MPP), which cleaves the mitochondrial sequence off newly imported precursors proteins.</text>
</comment>
<comment type="subunit">
    <text evidence="1">Heterodimer of mas2 (alpha) and mas1 (beta) subunits, forming the mitochondrial processing protease (MPP) in which mas2 is involved in substrate recognition and binding and mas1 is the catalytic subunit.</text>
</comment>
<comment type="subcellular location">
    <subcellularLocation>
        <location evidence="3">Mitochondrion matrix</location>
    </subcellularLocation>
</comment>
<comment type="similarity">
    <text evidence="4">Belongs to the peptidase M16 family.</text>
</comment>
<comment type="caution">
    <text evidence="4">Does not seem to have protease activity as it lacks the zinc-binding site.</text>
</comment>
<evidence type="ECO:0000250" key="1">
    <source>
        <dbReference type="UniProtKB" id="P11914"/>
    </source>
</evidence>
<evidence type="ECO:0000255" key="2"/>
<evidence type="ECO:0000269" key="3">
    <source>
    </source>
</evidence>
<evidence type="ECO:0000305" key="4"/>
<keyword id="KW-0496">Mitochondrion</keyword>
<keyword id="KW-1185">Reference proteome</keyword>
<keyword id="KW-0809">Transit peptide</keyword>
<accession>O94745</accession>
<name>MPPA_SCHPO</name>
<reference key="1">
    <citation type="journal article" date="2002" name="Nature">
        <title>The genome sequence of Schizosaccharomyces pombe.</title>
        <authorList>
            <person name="Wood V."/>
            <person name="Gwilliam R."/>
            <person name="Rajandream M.A."/>
            <person name="Lyne M.H."/>
            <person name="Lyne R."/>
            <person name="Stewart A."/>
            <person name="Sgouros J.G."/>
            <person name="Peat N."/>
            <person name="Hayles J."/>
            <person name="Baker S.G."/>
            <person name="Basham D."/>
            <person name="Bowman S."/>
            <person name="Brooks K."/>
            <person name="Brown D."/>
            <person name="Brown S."/>
            <person name="Chillingworth T."/>
            <person name="Churcher C.M."/>
            <person name="Collins M."/>
            <person name="Connor R."/>
            <person name="Cronin A."/>
            <person name="Davis P."/>
            <person name="Feltwell T."/>
            <person name="Fraser A."/>
            <person name="Gentles S."/>
            <person name="Goble A."/>
            <person name="Hamlin N."/>
            <person name="Harris D.E."/>
            <person name="Hidalgo J."/>
            <person name="Hodgson G."/>
            <person name="Holroyd S."/>
            <person name="Hornsby T."/>
            <person name="Howarth S."/>
            <person name="Huckle E.J."/>
            <person name="Hunt S."/>
            <person name="Jagels K."/>
            <person name="James K.D."/>
            <person name="Jones L."/>
            <person name="Jones M."/>
            <person name="Leather S."/>
            <person name="McDonald S."/>
            <person name="McLean J."/>
            <person name="Mooney P."/>
            <person name="Moule S."/>
            <person name="Mungall K.L."/>
            <person name="Murphy L.D."/>
            <person name="Niblett D."/>
            <person name="Odell C."/>
            <person name="Oliver K."/>
            <person name="O'Neil S."/>
            <person name="Pearson D."/>
            <person name="Quail M.A."/>
            <person name="Rabbinowitsch E."/>
            <person name="Rutherford K.M."/>
            <person name="Rutter S."/>
            <person name="Saunders D."/>
            <person name="Seeger K."/>
            <person name="Sharp S."/>
            <person name="Skelton J."/>
            <person name="Simmonds M.N."/>
            <person name="Squares R."/>
            <person name="Squares S."/>
            <person name="Stevens K."/>
            <person name="Taylor K."/>
            <person name="Taylor R.G."/>
            <person name="Tivey A."/>
            <person name="Walsh S.V."/>
            <person name="Warren T."/>
            <person name="Whitehead S."/>
            <person name="Woodward J.R."/>
            <person name="Volckaert G."/>
            <person name="Aert R."/>
            <person name="Robben J."/>
            <person name="Grymonprez B."/>
            <person name="Weltjens I."/>
            <person name="Vanstreels E."/>
            <person name="Rieger M."/>
            <person name="Schaefer M."/>
            <person name="Mueller-Auer S."/>
            <person name="Gabel C."/>
            <person name="Fuchs M."/>
            <person name="Duesterhoeft A."/>
            <person name="Fritzc C."/>
            <person name="Holzer E."/>
            <person name="Moestl D."/>
            <person name="Hilbert H."/>
            <person name="Borzym K."/>
            <person name="Langer I."/>
            <person name="Beck A."/>
            <person name="Lehrach H."/>
            <person name="Reinhardt R."/>
            <person name="Pohl T.M."/>
            <person name="Eger P."/>
            <person name="Zimmermann W."/>
            <person name="Wedler H."/>
            <person name="Wambutt R."/>
            <person name="Purnelle B."/>
            <person name="Goffeau A."/>
            <person name="Cadieu E."/>
            <person name="Dreano S."/>
            <person name="Gloux S."/>
            <person name="Lelaure V."/>
            <person name="Mottier S."/>
            <person name="Galibert F."/>
            <person name="Aves S.J."/>
            <person name="Xiang Z."/>
            <person name="Hunt C."/>
            <person name="Moore K."/>
            <person name="Hurst S.M."/>
            <person name="Lucas M."/>
            <person name="Rochet M."/>
            <person name="Gaillardin C."/>
            <person name="Tallada V.A."/>
            <person name="Garzon A."/>
            <person name="Thode G."/>
            <person name="Daga R.R."/>
            <person name="Cruzado L."/>
            <person name="Jimenez J."/>
            <person name="Sanchez M."/>
            <person name="del Rey F."/>
            <person name="Benito J."/>
            <person name="Dominguez A."/>
            <person name="Revuelta J.L."/>
            <person name="Moreno S."/>
            <person name="Armstrong J."/>
            <person name="Forsburg S.L."/>
            <person name="Cerutti L."/>
            <person name="Lowe T."/>
            <person name="McCombie W.R."/>
            <person name="Paulsen I."/>
            <person name="Potashkin J."/>
            <person name="Shpakovski G.V."/>
            <person name="Ussery D."/>
            <person name="Barrell B.G."/>
            <person name="Nurse P."/>
        </authorList>
    </citation>
    <scope>NUCLEOTIDE SEQUENCE [LARGE SCALE GENOMIC DNA]</scope>
    <source>
        <strain>972 / ATCC 24843</strain>
    </source>
</reference>
<reference key="2">
    <citation type="journal article" date="2011" name="Science">
        <title>Comparative functional genomics of the fission yeasts.</title>
        <authorList>
            <person name="Rhind N."/>
            <person name="Chen Z."/>
            <person name="Yassour M."/>
            <person name="Thompson D.A."/>
            <person name="Haas B.J."/>
            <person name="Habib N."/>
            <person name="Wapinski I."/>
            <person name="Roy S."/>
            <person name="Lin M.F."/>
            <person name="Heiman D.I."/>
            <person name="Young S.K."/>
            <person name="Furuya K."/>
            <person name="Guo Y."/>
            <person name="Pidoux A."/>
            <person name="Chen H.M."/>
            <person name="Robbertse B."/>
            <person name="Goldberg J.M."/>
            <person name="Aoki K."/>
            <person name="Bayne E.H."/>
            <person name="Berlin A.M."/>
            <person name="Desjardins C.A."/>
            <person name="Dobbs E."/>
            <person name="Dukaj L."/>
            <person name="Fan L."/>
            <person name="FitzGerald M.G."/>
            <person name="French C."/>
            <person name="Gujja S."/>
            <person name="Hansen K."/>
            <person name="Keifenheim D."/>
            <person name="Levin J.Z."/>
            <person name="Mosher R.A."/>
            <person name="Mueller C.A."/>
            <person name="Pfiffner J."/>
            <person name="Priest M."/>
            <person name="Russ C."/>
            <person name="Smialowska A."/>
            <person name="Swoboda P."/>
            <person name="Sykes S.M."/>
            <person name="Vaughn M."/>
            <person name="Vengrova S."/>
            <person name="Yoder R."/>
            <person name="Zeng Q."/>
            <person name="Allshire R."/>
            <person name="Baulcombe D."/>
            <person name="Birren B.W."/>
            <person name="Brown W."/>
            <person name="Ekwall K."/>
            <person name="Kellis M."/>
            <person name="Leatherwood J."/>
            <person name="Levin H."/>
            <person name="Margalit H."/>
            <person name="Martienssen R."/>
            <person name="Nieduszynski C.A."/>
            <person name="Spatafora J.W."/>
            <person name="Friedman N."/>
            <person name="Dalgaard J.Z."/>
            <person name="Baumann P."/>
            <person name="Niki H."/>
            <person name="Regev A."/>
            <person name="Nusbaum C."/>
        </authorList>
    </citation>
    <scope>REVISION OF GENE MODEL</scope>
</reference>
<reference key="3">
    <citation type="journal article" date="2006" name="Nat. Biotechnol.">
        <title>ORFeome cloning and global analysis of protein localization in the fission yeast Schizosaccharomyces pombe.</title>
        <authorList>
            <person name="Matsuyama A."/>
            <person name="Arai R."/>
            <person name="Yashiroda Y."/>
            <person name="Shirai A."/>
            <person name="Kamata A."/>
            <person name="Sekido S."/>
            <person name="Kobayashi Y."/>
            <person name="Hashimoto A."/>
            <person name="Hamamoto M."/>
            <person name="Hiraoka Y."/>
            <person name="Horinouchi S."/>
            <person name="Yoshida M."/>
        </authorList>
    </citation>
    <scope>SUBCELLULAR LOCATION [LARGE SCALE ANALYSIS]</scope>
</reference>